<organism>
    <name type="scientific">Allorhizobium ampelinum (strain ATCC BAA-846 / DSM 112012 / S4)</name>
    <name type="common">Agrobacterium vitis (strain S4)</name>
    <dbReference type="NCBI Taxonomy" id="311402"/>
    <lineage>
        <taxon>Bacteria</taxon>
        <taxon>Pseudomonadati</taxon>
        <taxon>Pseudomonadota</taxon>
        <taxon>Alphaproteobacteria</taxon>
        <taxon>Hyphomicrobiales</taxon>
        <taxon>Rhizobiaceae</taxon>
        <taxon>Rhizobium/Agrobacterium group</taxon>
        <taxon>Allorhizobium</taxon>
        <taxon>Allorhizobium ampelinum</taxon>
    </lineage>
</organism>
<accession>B9JZJ4</accession>
<keyword id="KW-0963">Cytoplasm</keyword>
<keyword id="KW-0255">Endonuclease</keyword>
<keyword id="KW-0378">Hydrolase</keyword>
<keyword id="KW-0479">Metal-binding</keyword>
<keyword id="KW-0540">Nuclease</keyword>
<keyword id="KW-1185">Reference proteome</keyword>
<keyword id="KW-0690">Ribosome biogenesis</keyword>
<keyword id="KW-0698">rRNA processing</keyword>
<keyword id="KW-0862">Zinc</keyword>
<name>YBEY_ALLAM</name>
<reference key="1">
    <citation type="journal article" date="2009" name="J. Bacteriol.">
        <title>Genome sequences of three Agrobacterium biovars help elucidate the evolution of multichromosome genomes in bacteria.</title>
        <authorList>
            <person name="Slater S.C."/>
            <person name="Goldman B.S."/>
            <person name="Goodner B."/>
            <person name="Setubal J.C."/>
            <person name="Farrand S.K."/>
            <person name="Nester E.W."/>
            <person name="Burr T.J."/>
            <person name="Banta L."/>
            <person name="Dickerman A.W."/>
            <person name="Paulsen I."/>
            <person name="Otten L."/>
            <person name="Suen G."/>
            <person name="Welch R."/>
            <person name="Almeida N.F."/>
            <person name="Arnold F."/>
            <person name="Burton O.T."/>
            <person name="Du Z."/>
            <person name="Ewing A."/>
            <person name="Godsy E."/>
            <person name="Heisel S."/>
            <person name="Houmiel K.L."/>
            <person name="Jhaveri J."/>
            <person name="Lu J."/>
            <person name="Miller N.M."/>
            <person name="Norton S."/>
            <person name="Chen Q."/>
            <person name="Phoolcharoen W."/>
            <person name="Ohlin V."/>
            <person name="Ondrusek D."/>
            <person name="Pride N."/>
            <person name="Stricklin S.L."/>
            <person name="Sun J."/>
            <person name="Wheeler C."/>
            <person name="Wilson L."/>
            <person name="Zhu H."/>
            <person name="Wood D.W."/>
        </authorList>
    </citation>
    <scope>NUCLEOTIDE SEQUENCE [LARGE SCALE GENOMIC DNA]</scope>
    <source>
        <strain>ATCC BAA-846 / DSM 112012 / S4</strain>
    </source>
</reference>
<feature type="chain" id="PRO_1000199942" description="Endoribonuclease YbeY">
    <location>
        <begin position="1"/>
        <end position="167"/>
    </location>
</feature>
<feature type="binding site" evidence="1">
    <location>
        <position position="125"/>
    </location>
    <ligand>
        <name>Zn(2+)</name>
        <dbReference type="ChEBI" id="CHEBI:29105"/>
        <note>catalytic</note>
    </ligand>
</feature>
<feature type="binding site" evidence="1">
    <location>
        <position position="129"/>
    </location>
    <ligand>
        <name>Zn(2+)</name>
        <dbReference type="ChEBI" id="CHEBI:29105"/>
        <note>catalytic</note>
    </ligand>
</feature>
<feature type="binding site" evidence="1">
    <location>
        <position position="135"/>
    </location>
    <ligand>
        <name>Zn(2+)</name>
        <dbReference type="ChEBI" id="CHEBI:29105"/>
        <note>catalytic</note>
    </ligand>
</feature>
<gene>
    <name evidence="1" type="primary">ybeY</name>
    <name type="ordered locus">Avi_0440</name>
</gene>
<sequence>MKKLDVQIAIEADGWPDEAELEALSTRILDHAADFIAAEGQPFAPMPAEVSLVFTGDTEIQAINSEWRGQDKPTNVLSFPAYPIEPGDKPGPMLGDIVIARQTVEREAAELEKTITDHLTHLMVHGFLHLFGYDHMTEDEAEEMEGLETRILAGLGLSDPYAGQVPV</sequence>
<comment type="function">
    <text evidence="1">Single strand-specific metallo-endoribonuclease involved in late-stage 70S ribosome quality control and in maturation of the 3' terminus of the 16S rRNA.</text>
</comment>
<comment type="cofactor">
    <cofactor evidence="1">
        <name>Zn(2+)</name>
        <dbReference type="ChEBI" id="CHEBI:29105"/>
    </cofactor>
    <text evidence="1">Binds 1 zinc ion.</text>
</comment>
<comment type="subcellular location">
    <subcellularLocation>
        <location evidence="1">Cytoplasm</location>
    </subcellularLocation>
</comment>
<comment type="similarity">
    <text evidence="1">Belongs to the endoribonuclease YbeY family.</text>
</comment>
<proteinExistence type="inferred from homology"/>
<evidence type="ECO:0000255" key="1">
    <source>
        <dbReference type="HAMAP-Rule" id="MF_00009"/>
    </source>
</evidence>
<protein>
    <recommendedName>
        <fullName evidence="1">Endoribonuclease YbeY</fullName>
        <ecNumber evidence="1">3.1.-.-</ecNumber>
    </recommendedName>
</protein>
<dbReference type="EC" id="3.1.-.-" evidence="1"/>
<dbReference type="EMBL" id="CP000633">
    <property type="protein sequence ID" value="ACM35306.1"/>
    <property type="molecule type" value="Genomic_DNA"/>
</dbReference>
<dbReference type="RefSeq" id="WP_012654836.1">
    <property type="nucleotide sequence ID" value="NC_011989.1"/>
</dbReference>
<dbReference type="SMR" id="B9JZJ4"/>
<dbReference type="STRING" id="311402.Avi_0440"/>
<dbReference type="KEGG" id="avi:Avi_0440"/>
<dbReference type="eggNOG" id="COG0319">
    <property type="taxonomic scope" value="Bacteria"/>
</dbReference>
<dbReference type="HOGENOM" id="CLU_106710_0_0_5"/>
<dbReference type="Proteomes" id="UP000001596">
    <property type="component" value="Chromosome 1"/>
</dbReference>
<dbReference type="GO" id="GO:0005737">
    <property type="term" value="C:cytoplasm"/>
    <property type="evidence" value="ECO:0007669"/>
    <property type="project" value="UniProtKB-SubCell"/>
</dbReference>
<dbReference type="GO" id="GO:0004222">
    <property type="term" value="F:metalloendopeptidase activity"/>
    <property type="evidence" value="ECO:0007669"/>
    <property type="project" value="InterPro"/>
</dbReference>
<dbReference type="GO" id="GO:0004521">
    <property type="term" value="F:RNA endonuclease activity"/>
    <property type="evidence" value="ECO:0007669"/>
    <property type="project" value="UniProtKB-UniRule"/>
</dbReference>
<dbReference type="GO" id="GO:0008270">
    <property type="term" value="F:zinc ion binding"/>
    <property type="evidence" value="ECO:0007669"/>
    <property type="project" value="UniProtKB-UniRule"/>
</dbReference>
<dbReference type="GO" id="GO:0006364">
    <property type="term" value="P:rRNA processing"/>
    <property type="evidence" value="ECO:0007669"/>
    <property type="project" value="UniProtKB-UniRule"/>
</dbReference>
<dbReference type="Gene3D" id="3.40.390.30">
    <property type="entry name" value="Metalloproteases ('zincins'), catalytic domain"/>
    <property type="match status" value="1"/>
</dbReference>
<dbReference type="HAMAP" id="MF_00009">
    <property type="entry name" value="Endoribonucl_YbeY"/>
    <property type="match status" value="1"/>
</dbReference>
<dbReference type="InterPro" id="IPR023091">
    <property type="entry name" value="MetalPrtase_cat_dom_sf_prd"/>
</dbReference>
<dbReference type="InterPro" id="IPR002036">
    <property type="entry name" value="YbeY"/>
</dbReference>
<dbReference type="InterPro" id="IPR020549">
    <property type="entry name" value="YbeY_CS"/>
</dbReference>
<dbReference type="NCBIfam" id="TIGR00043">
    <property type="entry name" value="rRNA maturation RNase YbeY"/>
    <property type="match status" value="1"/>
</dbReference>
<dbReference type="PANTHER" id="PTHR46986">
    <property type="entry name" value="ENDORIBONUCLEASE YBEY, CHLOROPLASTIC"/>
    <property type="match status" value="1"/>
</dbReference>
<dbReference type="PANTHER" id="PTHR46986:SF1">
    <property type="entry name" value="ENDORIBONUCLEASE YBEY, CHLOROPLASTIC"/>
    <property type="match status" value="1"/>
</dbReference>
<dbReference type="Pfam" id="PF02130">
    <property type="entry name" value="YbeY"/>
    <property type="match status" value="1"/>
</dbReference>
<dbReference type="SUPFAM" id="SSF55486">
    <property type="entry name" value="Metalloproteases ('zincins'), catalytic domain"/>
    <property type="match status" value="1"/>
</dbReference>
<dbReference type="PROSITE" id="PS01306">
    <property type="entry name" value="UPF0054"/>
    <property type="match status" value="1"/>
</dbReference>